<dbReference type="EC" id="3.6.4.13" evidence="1"/>
<dbReference type="EMBL" id="D83026">
    <property type="protein sequence ID" value="BAA11693.1"/>
    <property type="molecule type" value="Genomic_DNA"/>
</dbReference>
<dbReference type="EMBL" id="AL009126">
    <property type="protein sequence ID" value="CAB15947.2"/>
    <property type="molecule type" value="Genomic_DNA"/>
</dbReference>
<dbReference type="PIR" id="E69613">
    <property type="entry name" value="E69613"/>
</dbReference>
<dbReference type="RefSeq" id="NP_391790.2">
    <property type="nucleotide sequence ID" value="NC_000964.3"/>
</dbReference>
<dbReference type="RefSeq" id="WP_003243023.1">
    <property type="nucleotide sequence ID" value="NZ_OZ025638.1"/>
</dbReference>
<dbReference type="PDB" id="2G0C">
    <property type="method" value="X-ray"/>
    <property type="resolution" value="1.70 A"/>
    <property type="chains" value="A=404-479"/>
</dbReference>
<dbReference type="PDB" id="2HJV">
    <property type="method" value="X-ray"/>
    <property type="resolution" value="1.95 A"/>
    <property type="chains" value="A/B=207-368"/>
</dbReference>
<dbReference type="PDB" id="3MOJ">
    <property type="method" value="X-ray"/>
    <property type="resolution" value="2.90 A"/>
    <property type="chains" value="B=404-479"/>
</dbReference>
<dbReference type="PDBsum" id="2G0C"/>
<dbReference type="PDBsum" id="2HJV"/>
<dbReference type="PDBsum" id="3MOJ"/>
<dbReference type="SMR" id="P42305"/>
<dbReference type="FunCoup" id="P42305">
    <property type="interactions" value="401"/>
</dbReference>
<dbReference type="STRING" id="224308.BSU39110"/>
<dbReference type="PaxDb" id="224308-BSU39110"/>
<dbReference type="EnsemblBacteria" id="CAB15947">
    <property type="protein sequence ID" value="CAB15947"/>
    <property type="gene ID" value="BSU_39110"/>
</dbReference>
<dbReference type="GeneID" id="937492"/>
<dbReference type="KEGG" id="bsu:BSU39110"/>
<dbReference type="PATRIC" id="fig|224308.179.peg.4235"/>
<dbReference type="eggNOG" id="COG0513">
    <property type="taxonomic scope" value="Bacteria"/>
</dbReference>
<dbReference type="InParanoid" id="P42305"/>
<dbReference type="OrthoDB" id="9805696at2"/>
<dbReference type="PhylomeDB" id="P42305"/>
<dbReference type="BioCyc" id="BSUB:BSU39110-MONOMER"/>
<dbReference type="EvolutionaryTrace" id="P42305"/>
<dbReference type="Proteomes" id="UP000001570">
    <property type="component" value="Chromosome"/>
</dbReference>
<dbReference type="GO" id="GO:0005829">
    <property type="term" value="C:cytosol"/>
    <property type="evidence" value="ECO:0000318"/>
    <property type="project" value="GO_Central"/>
</dbReference>
<dbReference type="GO" id="GO:0034458">
    <property type="term" value="F:3'-5' RNA helicase activity"/>
    <property type="evidence" value="ECO:0007669"/>
    <property type="project" value="UniProtKB-UniRule"/>
</dbReference>
<dbReference type="GO" id="GO:0005524">
    <property type="term" value="F:ATP binding"/>
    <property type="evidence" value="ECO:0007669"/>
    <property type="project" value="UniProtKB-UniRule"/>
</dbReference>
<dbReference type="GO" id="GO:0016887">
    <property type="term" value="F:ATP hydrolysis activity"/>
    <property type="evidence" value="ECO:0007669"/>
    <property type="project" value="RHEA"/>
</dbReference>
<dbReference type="GO" id="GO:0003724">
    <property type="term" value="F:RNA helicase activity"/>
    <property type="evidence" value="ECO:0000318"/>
    <property type="project" value="GO_Central"/>
</dbReference>
<dbReference type="GO" id="GO:0033592">
    <property type="term" value="F:RNA strand annealing activity"/>
    <property type="evidence" value="ECO:0000318"/>
    <property type="project" value="GO_Central"/>
</dbReference>
<dbReference type="GO" id="GO:0009409">
    <property type="term" value="P:response to cold"/>
    <property type="evidence" value="ECO:0000318"/>
    <property type="project" value="GO_Central"/>
</dbReference>
<dbReference type="GO" id="GO:0000027">
    <property type="term" value="P:ribosomal large subunit assembly"/>
    <property type="evidence" value="ECO:0007669"/>
    <property type="project" value="UniProtKB-UniRule"/>
</dbReference>
<dbReference type="CDD" id="cd00268">
    <property type="entry name" value="DEADc"/>
    <property type="match status" value="1"/>
</dbReference>
<dbReference type="CDD" id="cd12500">
    <property type="entry name" value="RRM_BsYxiN_like"/>
    <property type="match status" value="1"/>
</dbReference>
<dbReference type="CDD" id="cd18787">
    <property type="entry name" value="SF2_C_DEAD"/>
    <property type="match status" value="1"/>
</dbReference>
<dbReference type="FunFam" id="3.30.70.330:FF:000068">
    <property type="entry name" value="ATP-dependent RNA helicase DeaD"/>
    <property type="match status" value="1"/>
</dbReference>
<dbReference type="Gene3D" id="3.30.70.330">
    <property type="match status" value="1"/>
</dbReference>
<dbReference type="Gene3D" id="3.40.50.300">
    <property type="entry name" value="P-loop containing nucleotide triphosphate hydrolases"/>
    <property type="match status" value="2"/>
</dbReference>
<dbReference type="HAMAP" id="MF_00965">
    <property type="entry name" value="DEAD_helicase_DbpA"/>
    <property type="match status" value="1"/>
</dbReference>
<dbReference type="InterPro" id="IPR005580">
    <property type="entry name" value="DbpA/CsdA_RNA-bd_dom"/>
</dbReference>
<dbReference type="InterPro" id="IPR011545">
    <property type="entry name" value="DEAD/DEAH_box_helicase_dom"/>
</dbReference>
<dbReference type="InterPro" id="IPR050079">
    <property type="entry name" value="DEAD_box_RNA_helicase"/>
</dbReference>
<dbReference type="InterPro" id="IPR028619">
    <property type="entry name" value="DEAD_helicase_DbpA"/>
</dbReference>
<dbReference type="InterPro" id="IPR014001">
    <property type="entry name" value="Helicase_ATP-bd"/>
</dbReference>
<dbReference type="InterPro" id="IPR001650">
    <property type="entry name" value="Helicase_C-like"/>
</dbReference>
<dbReference type="InterPro" id="IPR012677">
    <property type="entry name" value="Nucleotide-bd_a/b_plait_sf"/>
</dbReference>
<dbReference type="InterPro" id="IPR027417">
    <property type="entry name" value="P-loop_NTPase"/>
</dbReference>
<dbReference type="InterPro" id="IPR000629">
    <property type="entry name" value="RNA-helicase_DEAD-box_CS"/>
</dbReference>
<dbReference type="InterPro" id="IPR014014">
    <property type="entry name" value="RNA_helicase_DEAD_Q_motif"/>
</dbReference>
<dbReference type="PANTHER" id="PTHR47959:SF1">
    <property type="entry name" value="ATP-DEPENDENT RNA HELICASE DBPA"/>
    <property type="match status" value="1"/>
</dbReference>
<dbReference type="PANTHER" id="PTHR47959">
    <property type="entry name" value="ATP-DEPENDENT RNA HELICASE RHLE-RELATED"/>
    <property type="match status" value="1"/>
</dbReference>
<dbReference type="Pfam" id="PF03880">
    <property type="entry name" value="DbpA"/>
    <property type="match status" value="1"/>
</dbReference>
<dbReference type="Pfam" id="PF00270">
    <property type="entry name" value="DEAD"/>
    <property type="match status" value="1"/>
</dbReference>
<dbReference type="Pfam" id="PF00271">
    <property type="entry name" value="Helicase_C"/>
    <property type="match status" value="1"/>
</dbReference>
<dbReference type="SMART" id="SM00487">
    <property type="entry name" value="DEXDc"/>
    <property type="match status" value="1"/>
</dbReference>
<dbReference type="SMART" id="SM00490">
    <property type="entry name" value="HELICc"/>
    <property type="match status" value="1"/>
</dbReference>
<dbReference type="SUPFAM" id="SSF52540">
    <property type="entry name" value="P-loop containing nucleoside triphosphate hydrolases"/>
    <property type="match status" value="1"/>
</dbReference>
<dbReference type="PROSITE" id="PS00039">
    <property type="entry name" value="DEAD_ATP_HELICASE"/>
    <property type="match status" value="1"/>
</dbReference>
<dbReference type="PROSITE" id="PS51192">
    <property type="entry name" value="HELICASE_ATP_BIND_1"/>
    <property type="match status" value="1"/>
</dbReference>
<dbReference type="PROSITE" id="PS51194">
    <property type="entry name" value="HELICASE_CTER"/>
    <property type="match status" value="1"/>
</dbReference>
<dbReference type="PROSITE" id="PS51195">
    <property type="entry name" value="Q_MOTIF"/>
    <property type="match status" value="1"/>
</dbReference>
<accession>P42305</accession>
<reference key="1">
    <citation type="journal article" date="1996" name="Microbiology">
        <title>Sequencing of a 65 kb region of the Bacillus subtilis genome containing the lic and cel loci, and creation of a 177 kb contig covering the gnt-sacXY region.</title>
        <authorList>
            <person name="Yoshida K."/>
            <person name="Shindo K."/>
            <person name="Sano H."/>
            <person name="Seki S."/>
            <person name="Fujimura M."/>
            <person name="Yanai N."/>
            <person name="Miwa Y."/>
            <person name="Fujita Y."/>
        </authorList>
    </citation>
    <scope>NUCLEOTIDE SEQUENCE [GENOMIC DNA]</scope>
    <source>
        <strain>168 / BGSC1A1</strain>
    </source>
</reference>
<reference key="2">
    <citation type="journal article" date="1997" name="Nature">
        <title>The complete genome sequence of the Gram-positive bacterium Bacillus subtilis.</title>
        <authorList>
            <person name="Kunst F."/>
            <person name="Ogasawara N."/>
            <person name="Moszer I."/>
            <person name="Albertini A.M."/>
            <person name="Alloni G."/>
            <person name="Azevedo V."/>
            <person name="Bertero M.G."/>
            <person name="Bessieres P."/>
            <person name="Bolotin A."/>
            <person name="Borchert S."/>
            <person name="Borriss R."/>
            <person name="Boursier L."/>
            <person name="Brans A."/>
            <person name="Braun M."/>
            <person name="Brignell S.C."/>
            <person name="Bron S."/>
            <person name="Brouillet S."/>
            <person name="Bruschi C.V."/>
            <person name="Caldwell B."/>
            <person name="Capuano V."/>
            <person name="Carter N.M."/>
            <person name="Choi S.-K."/>
            <person name="Codani J.-J."/>
            <person name="Connerton I.F."/>
            <person name="Cummings N.J."/>
            <person name="Daniel R.A."/>
            <person name="Denizot F."/>
            <person name="Devine K.M."/>
            <person name="Duesterhoeft A."/>
            <person name="Ehrlich S.D."/>
            <person name="Emmerson P.T."/>
            <person name="Entian K.-D."/>
            <person name="Errington J."/>
            <person name="Fabret C."/>
            <person name="Ferrari E."/>
            <person name="Foulger D."/>
            <person name="Fritz C."/>
            <person name="Fujita M."/>
            <person name="Fujita Y."/>
            <person name="Fuma S."/>
            <person name="Galizzi A."/>
            <person name="Galleron N."/>
            <person name="Ghim S.-Y."/>
            <person name="Glaser P."/>
            <person name="Goffeau A."/>
            <person name="Golightly E.J."/>
            <person name="Grandi G."/>
            <person name="Guiseppi G."/>
            <person name="Guy B.J."/>
            <person name="Haga K."/>
            <person name="Haiech J."/>
            <person name="Harwood C.R."/>
            <person name="Henaut A."/>
            <person name="Hilbert H."/>
            <person name="Holsappel S."/>
            <person name="Hosono S."/>
            <person name="Hullo M.-F."/>
            <person name="Itaya M."/>
            <person name="Jones L.-M."/>
            <person name="Joris B."/>
            <person name="Karamata D."/>
            <person name="Kasahara Y."/>
            <person name="Klaerr-Blanchard M."/>
            <person name="Klein C."/>
            <person name="Kobayashi Y."/>
            <person name="Koetter P."/>
            <person name="Koningstein G."/>
            <person name="Krogh S."/>
            <person name="Kumano M."/>
            <person name="Kurita K."/>
            <person name="Lapidus A."/>
            <person name="Lardinois S."/>
            <person name="Lauber J."/>
            <person name="Lazarevic V."/>
            <person name="Lee S.-M."/>
            <person name="Levine A."/>
            <person name="Liu H."/>
            <person name="Masuda S."/>
            <person name="Mauel C."/>
            <person name="Medigue C."/>
            <person name="Medina N."/>
            <person name="Mellado R.P."/>
            <person name="Mizuno M."/>
            <person name="Moestl D."/>
            <person name="Nakai S."/>
            <person name="Noback M."/>
            <person name="Noone D."/>
            <person name="O'Reilly M."/>
            <person name="Ogawa K."/>
            <person name="Ogiwara A."/>
            <person name="Oudega B."/>
            <person name="Park S.-H."/>
            <person name="Parro V."/>
            <person name="Pohl T.M."/>
            <person name="Portetelle D."/>
            <person name="Porwollik S."/>
            <person name="Prescott A.M."/>
            <person name="Presecan E."/>
            <person name="Pujic P."/>
            <person name="Purnelle B."/>
            <person name="Rapoport G."/>
            <person name="Rey M."/>
            <person name="Reynolds S."/>
            <person name="Rieger M."/>
            <person name="Rivolta C."/>
            <person name="Rocha E."/>
            <person name="Roche B."/>
            <person name="Rose M."/>
            <person name="Sadaie Y."/>
            <person name="Sato T."/>
            <person name="Scanlan E."/>
            <person name="Schleich S."/>
            <person name="Schroeter R."/>
            <person name="Scoffone F."/>
            <person name="Sekiguchi J."/>
            <person name="Sekowska A."/>
            <person name="Seror S.J."/>
            <person name="Serror P."/>
            <person name="Shin B.-S."/>
            <person name="Soldo B."/>
            <person name="Sorokin A."/>
            <person name="Tacconi E."/>
            <person name="Takagi T."/>
            <person name="Takahashi H."/>
            <person name="Takemaru K."/>
            <person name="Takeuchi M."/>
            <person name="Tamakoshi A."/>
            <person name="Tanaka T."/>
            <person name="Terpstra P."/>
            <person name="Tognoni A."/>
            <person name="Tosato V."/>
            <person name="Uchiyama S."/>
            <person name="Vandenbol M."/>
            <person name="Vannier F."/>
            <person name="Vassarotti A."/>
            <person name="Viari A."/>
            <person name="Wambutt R."/>
            <person name="Wedler E."/>
            <person name="Wedler H."/>
            <person name="Weitzenegger T."/>
            <person name="Winters P."/>
            <person name="Wipat A."/>
            <person name="Yamamoto H."/>
            <person name="Yamane K."/>
            <person name="Yasumoto K."/>
            <person name="Yata K."/>
            <person name="Yoshida K."/>
            <person name="Yoshikawa H.-F."/>
            <person name="Zumstein E."/>
            <person name="Yoshikawa H."/>
            <person name="Danchin A."/>
        </authorList>
    </citation>
    <scope>NUCLEOTIDE SEQUENCE [LARGE SCALE GENOMIC DNA]</scope>
    <source>
        <strain>168</strain>
    </source>
</reference>
<reference key="3">
    <citation type="journal article" date="2009" name="Microbiology">
        <title>From a consortium sequence to a unified sequence: the Bacillus subtilis 168 reference genome a decade later.</title>
        <authorList>
            <person name="Barbe V."/>
            <person name="Cruveiller S."/>
            <person name="Kunst F."/>
            <person name="Lenoble P."/>
            <person name="Meurice G."/>
            <person name="Sekowska A."/>
            <person name="Vallenet D."/>
            <person name="Wang T."/>
            <person name="Moszer I."/>
            <person name="Medigue C."/>
            <person name="Danchin A."/>
        </authorList>
    </citation>
    <scope>SEQUENCE REVISION TO 364</scope>
</reference>
<reference key="4">
    <citation type="journal article" date="1999" name="Nucleic Acids Res.">
        <title>Cloning and biochemical characterization of Bacillus subtilis YxiN, a DEAD protein specifically activated by 23S rRNA: delineation of a novel sub-family of bacterial DEAD proteins.</title>
        <authorList>
            <person name="Kossen K."/>
            <person name="Uhlenbeck O.C."/>
        </authorList>
    </citation>
    <scope>FUNCTION</scope>
    <scope>CATALYTIC ACTIVITY</scope>
    <scope>ACTIVITY REGULATION</scope>
    <scope>DOMAIN</scope>
    <source>
        <strain>168</strain>
    </source>
</reference>
<reference key="5">
    <citation type="journal article" date="2009" name="Nucleic Acids Res.">
        <title>A conformational change in the helicase core is necessary but not sufficient for RNA unwinding by the DEAD box helicase YxiN.</title>
        <authorList>
            <person name="Karow A.R."/>
            <person name="Klostermeier D."/>
        </authorList>
    </citation>
    <scope>FUNCTION</scope>
    <scope>CATALYTIC ACTIVITY</scope>
    <scope>ACTIVITY REGULATION</scope>
    <scope>DOMAIN</scope>
    <scope>MUTAGENESIS OF LYS-52; SER-182; THR-184 AND GLY-303</scope>
</reference>
<reference key="6">
    <citation type="journal article" date="2010" name="Mol. Microbiol.">
        <title>The RNA degradosome in Bacillus subtilis: identification of CshA as the major RNA helicase in the multiprotein complex.</title>
        <authorList>
            <person name="Lehnik-Habrink M."/>
            <person name="Pfortner H."/>
            <person name="Rempeters L."/>
            <person name="Pietack N."/>
            <person name="Herzberg C."/>
            <person name="Stulke J."/>
        </authorList>
    </citation>
    <scope>SUBUNIT</scope>
    <source>
        <strain>168</strain>
    </source>
</reference>
<reference key="7">
    <citation type="journal article" date="2013" name="J. Bacteriol.">
        <title>DEAD-box RNA helicases in Bacillus subtilis have multiple functions and act independently from each other.</title>
        <authorList>
            <person name="Lehnik-Habrink M."/>
            <person name="Rempeters L."/>
            <person name="Kovacs A.T."/>
            <person name="Wrede C."/>
            <person name="Baierlein C."/>
            <person name="Krebber H."/>
            <person name="Kuipers O.P."/>
            <person name="Stulke J."/>
        </authorList>
    </citation>
    <scope>FUNCTION</scope>
    <scope>INDUCTION</scope>
    <scope>DISRUPTION PHENOTYPE</scope>
    <source>
        <strain>168</strain>
    </source>
</reference>
<reference key="8">
    <citation type="journal article" date="2006" name="Acta Crystallogr. F">
        <title>Structure of the second domain of the Bacillus subtilis DEAD-box RNA helicase YxiN.</title>
        <authorList>
            <person name="Caruthers J.M."/>
            <person name="Hu Y."/>
            <person name="McKay D.B."/>
        </authorList>
    </citation>
    <scope>X-RAY CRYSTALLOGRAPHY (1.95 ANGSTROMS) OF 207-368</scope>
    <scope>DOMAIN</scope>
</reference>
<reference key="9">
    <citation type="journal article" date="2006" name="RNA">
        <title>The domain of the Bacillus subtilis DEAD-box helicase YxiN that is responsible for specific binding of 23S rRNA has an RNA recognition motif fold.</title>
        <authorList>
            <person name="Wang S."/>
            <person name="Hu Y."/>
            <person name="Overgaard M.T."/>
            <person name="Karginov F.V."/>
            <person name="Uhlenbeck O.C."/>
            <person name="McKay D.B."/>
        </authorList>
    </citation>
    <scope>X-RAY CRYSTALLOGRAPHY (1.7 ANGSTROMS) OF 404-479</scope>
    <scope>DOMAIN</scope>
    <scope>RNA-BINDING</scope>
</reference>
<reference key="10">
    <citation type="journal article" date="2010" name="J. Mol. Biol.">
        <title>Structure of the RNA binding domain of a DEAD-box helicase bound to its ribosomal RNA target reveals a novel mode of recognition by an RNA recognition motif.</title>
        <authorList>
            <person name="Hardin J.W."/>
            <person name="Hu Y.X."/>
            <person name="McKay D.B."/>
        </authorList>
    </citation>
    <scope>X-RAY CRYSTALLOGRAPHY (2.90 ANGSTROMS) OF 404-479</scope>
    <scope>DOMAIN</scope>
    <scope>RNA-BINDING</scope>
</reference>
<feature type="chain" id="PRO_0000055097" description="ATP-dependent RNA helicase DbpA">
    <location>
        <begin position="1"/>
        <end position="479"/>
    </location>
</feature>
<feature type="domain" description="Helicase ATP-binding" evidence="1">
    <location>
        <begin position="33"/>
        <end position="203"/>
    </location>
</feature>
<feature type="domain" description="Helicase C-terminal" evidence="1">
    <location>
        <begin position="214"/>
        <end position="374"/>
    </location>
</feature>
<feature type="region of interest" description="Involved in 23S rRNA binding">
    <location>
        <begin position="404"/>
        <end position="479"/>
    </location>
</feature>
<feature type="short sequence motif" description="Q motif">
    <location>
        <begin position="2"/>
        <end position="30"/>
    </location>
</feature>
<feature type="short sequence motif" description="DEAD box">
    <location>
        <begin position="151"/>
        <end position="154"/>
    </location>
</feature>
<feature type="binding site" evidence="1">
    <location>
        <begin position="46"/>
        <end position="53"/>
    </location>
    <ligand>
        <name>ATP</name>
        <dbReference type="ChEBI" id="CHEBI:30616"/>
    </ligand>
</feature>
<feature type="mutagenesis site" description="Still adopts a closed conformation upon binding of ATP and RNA, but lacks ATPase and RNA unwinding activities." evidence="5">
    <original>K</original>
    <variation>Q</variation>
    <location>
        <position position="52"/>
    </location>
</feature>
<feature type="mutagenesis site" description="Slows down the catalytic cycle, but does not affect formation of a closed conformer and global conformation; when associated with A-184." evidence="5">
    <original>S</original>
    <variation>A</variation>
    <location>
        <position position="182"/>
    </location>
</feature>
<feature type="mutagenesis site" description="Slows down the catalytic cycle, but does not affect formation of a closed conformer and global conformation; when associated with A-182." evidence="5">
    <original>T</original>
    <variation>A</variation>
    <location>
        <position position="184"/>
    </location>
</feature>
<feature type="mutagenesis site" description="Prevents a complete closure of the inter-domain cleft, affecting ATP binding, ATP hydrolysis and RNA unwinding." evidence="5">
    <original>G</original>
    <variation>A</variation>
    <location>
        <position position="303"/>
    </location>
</feature>
<feature type="sequence conflict" description="In Ref. 1; BAA11693." evidence="9" ref="1">
    <original>Q</original>
    <variation>P</variation>
    <location>
        <position position="364"/>
    </location>
</feature>
<feature type="strand" evidence="14">
    <location>
        <begin position="215"/>
        <end position="221"/>
    </location>
</feature>
<feature type="helix" evidence="14">
    <location>
        <begin position="224"/>
        <end position="226"/>
    </location>
</feature>
<feature type="helix" evidence="14">
    <location>
        <begin position="227"/>
        <end position="238"/>
    </location>
</feature>
<feature type="strand" evidence="14">
    <location>
        <begin position="241"/>
        <end position="246"/>
    </location>
</feature>
<feature type="helix" evidence="14">
    <location>
        <begin position="250"/>
        <end position="262"/>
    </location>
</feature>
<feature type="strand" evidence="14">
    <location>
        <begin position="267"/>
        <end position="270"/>
    </location>
</feature>
<feature type="helix" evidence="14">
    <location>
        <begin position="276"/>
        <end position="287"/>
    </location>
</feature>
<feature type="strand" evidence="14">
    <location>
        <begin position="292"/>
        <end position="296"/>
    </location>
</feature>
<feature type="helix" evidence="14">
    <location>
        <begin position="298"/>
        <end position="300"/>
    </location>
</feature>
<feature type="turn" evidence="14">
    <location>
        <begin position="301"/>
        <end position="303"/>
    </location>
</feature>
<feature type="strand" evidence="14">
    <location>
        <begin position="310"/>
        <end position="316"/>
    </location>
</feature>
<feature type="helix" evidence="14">
    <location>
        <begin position="321"/>
        <end position="327"/>
    </location>
</feature>
<feature type="turn" evidence="14">
    <location>
        <begin position="328"/>
        <end position="330"/>
    </location>
</feature>
<feature type="strand" evidence="14">
    <location>
        <begin position="338"/>
        <end position="344"/>
    </location>
</feature>
<feature type="helix" evidence="14">
    <location>
        <begin position="346"/>
        <end position="348"/>
    </location>
</feature>
<feature type="helix" evidence="14">
    <location>
        <begin position="349"/>
        <end position="359"/>
    </location>
</feature>
<feature type="strand" evidence="13">
    <location>
        <begin position="405"/>
        <end position="409"/>
    </location>
</feature>
<feature type="helix" evidence="15">
    <location>
        <begin position="412"/>
        <end position="414"/>
    </location>
</feature>
<feature type="helix" evidence="13">
    <location>
        <begin position="419"/>
        <end position="426"/>
    </location>
</feature>
<feature type="helix" evidence="13">
    <location>
        <begin position="433"/>
        <end position="435"/>
    </location>
</feature>
<feature type="strand" evidence="13">
    <location>
        <begin position="436"/>
        <end position="441"/>
    </location>
</feature>
<feature type="strand" evidence="13">
    <location>
        <begin position="446"/>
        <end position="450"/>
    </location>
</feature>
<feature type="helix" evidence="13">
    <location>
        <begin position="455"/>
        <end position="462"/>
    </location>
</feature>
<feature type="strand" evidence="15">
    <location>
        <begin position="467"/>
        <end position="469"/>
    </location>
</feature>
<feature type="strand" evidence="13">
    <location>
        <begin position="474"/>
        <end position="476"/>
    </location>
</feature>
<organism>
    <name type="scientific">Bacillus subtilis (strain 168)</name>
    <dbReference type="NCBI Taxonomy" id="224308"/>
    <lineage>
        <taxon>Bacteria</taxon>
        <taxon>Bacillati</taxon>
        <taxon>Bacillota</taxon>
        <taxon>Bacilli</taxon>
        <taxon>Bacillales</taxon>
        <taxon>Bacillaceae</taxon>
        <taxon>Bacillus</taxon>
    </lineage>
</organism>
<proteinExistence type="evidence at protein level"/>
<protein>
    <recommendedName>
        <fullName evidence="1">ATP-dependent RNA helicase DbpA</fullName>
        <ecNumber evidence="1">3.6.4.13</ecNumber>
    </recommendedName>
</protein>
<gene>
    <name evidence="1" type="primary">dbpA</name>
    <name type="synonym">deaD</name>
    <name type="synonym">yxiN</name>
    <name type="ordered locus">BSU39110</name>
    <name type="ORF">SS8E</name>
</gene>
<keyword id="KW-0002">3D-structure</keyword>
<keyword id="KW-0067">ATP-binding</keyword>
<keyword id="KW-0963">Cytoplasm</keyword>
<keyword id="KW-0347">Helicase</keyword>
<keyword id="KW-0378">Hydrolase</keyword>
<keyword id="KW-0547">Nucleotide-binding</keyword>
<keyword id="KW-1185">Reference proteome</keyword>
<keyword id="KW-0690">Ribosome biogenesis</keyword>
<keyword id="KW-0694">RNA-binding</keyword>
<evidence type="ECO:0000255" key="1">
    <source>
        <dbReference type="HAMAP-Rule" id="MF_00965"/>
    </source>
</evidence>
<evidence type="ECO:0000269" key="2">
    <source>
    </source>
</evidence>
<evidence type="ECO:0000269" key="3">
    <source>
    </source>
</evidence>
<evidence type="ECO:0000269" key="4">
    <source>
    </source>
</evidence>
<evidence type="ECO:0000269" key="5">
    <source>
    </source>
</evidence>
<evidence type="ECO:0000269" key="6">
    <source>
    </source>
</evidence>
<evidence type="ECO:0000269" key="7">
    <source>
    </source>
</evidence>
<evidence type="ECO:0000269" key="8">
    <source>
    </source>
</evidence>
<evidence type="ECO:0000305" key="9"/>
<evidence type="ECO:0000305" key="10">
    <source>
    </source>
</evidence>
<evidence type="ECO:0000305" key="11">
    <source>
    </source>
</evidence>
<evidence type="ECO:0000305" key="12">
    <source>
    </source>
</evidence>
<evidence type="ECO:0007829" key="13">
    <source>
        <dbReference type="PDB" id="2G0C"/>
    </source>
</evidence>
<evidence type="ECO:0007829" key="14">
    <source>
        <dbReference type="PDB" id="2HJV"/>
    </source>
</evidence>
<evidence type="ECO:0007829" key="15">
    <source>
        <dbReference type="PDB" id="3MOJ"/>
    </source>
</evidence>
<comment type="function">
    <text evidence="10 11 12">DEAD-box RNA helicase involved in the assembly of the 50S ribosomal subunit. Has an RNA-dependent ATPase activity, which is specific for 23S rRNA, and a 3' to 5' RNA helicase activity that uses the energy of ATP hydrolysis to destabilize and unwind short rRNA duplexes (Probable).</text>
</comment>
<comment type="catalytic activity">
    <reaction evidence="1 2 5">
        <text>ATP + H2O = ADP + phosphate + H(+)</text>
        <dbReference type="Rhea" id="RHEA:13065"/>
        <dbReference type="ChEBI" id="CHEBI:15377"/>
        <dbReference type="ChEBI" id="CHEBI:15378"/>
        <dbReference type="ChEBI" id="CHEBI:30616"/>
        <dbReference type="ChEBI" id="CHEBI:43474"/>
        <dbReference type="ChEBI" id="CHEBI:456216"/>
        <dbReference type="EC" id="3.6.4.13"/>
    </reaction>
</comment>
<comment type="activity regulation">
    <text evidence="2 5">ATPase activity is stimulated by interaction with RNA.</text>
</comment>
<comment type="subunit">
    <text evidence="6">May interact with RNA helicases CshA and CshB.</text>
</comment>
<comment type="subcellular location">
    <subcellularLocation>
        <location evidence="9">Cytoplasm</location>
    </subcellularLocation>
</comment>
<comment type="induction">
    <text evidence="8">In rich medium highest expression in exponential growth, expression decreases in stationary phase (at protein level).</text>
</comment>
<comment type="domain">
    <text evidence="1 2 3 4 5 7">Contains an N-terminal domain that binds non-specifically to RNA and a C-terminal domain that binds specifically and tightly to hairpin 92 of 23S rRNA. Undergoes a conformation change in the helicase core upon binding of RNA and ATP.</text>
</comment>
<comment type="disruption phenotype">
    <text evidence="8">No visible effect at 37 or 16 degrees Celsius; no change in ribosome profiles. A quadruple disruption of all RNA helicases (cshA, cshB, deaD, yfmL) is not lethal at 37 degrees Celsius, although both 50S and 70S ribosomes are decreased, while growth stops at 16 degrees.</text>
</comment>
<comment type="similarity">
    <text evidence="1">Belongs to the DEAD box helicase family. DbpA subfamily.</text>
</comment>
<sequence>MSHFKNYQISHDILRALEGLGYTEPTKVQQSVIPAALERKDLVVKSQTGSGKTASFGIPLCELANWDENKPQALILTPTRELAVQVKEDITNIGRFKRIKATAVFGKSSFDKQKAELKQKSHIVVGTPGRVLDHIEKGTLPLDRLSYLVIDEADEMLNMGFIEQVEAIIKHLPTERTTMLFSATLPQDIEKLSRQYMQNPEHIEVKAAGLTTRNIEHAVIQVREENKFSLLKDVLMTENPDSCIIFCRTKEHVNQLTDELDDLGYPCDKIHGGMIQEDRFDVMNEFKRGEYRYLVATDVAARGIDIENISLVINYDLPLEKESYVHRTGRTGRAGNKGKAISFVTAFEKRFLADIEEYIGFEIQKIEAPSQEEVARKKPEFLAKLNDRPESKKDKSEELNKDIMKLYFNGGKKKKIRAVDFVGTIAKIDGVSADDIGIITIMDNASYVEILNGKGPHVLKVMKNTTVKGKQLKVNKANK</sequence>
<name>DBPA_BACSU</name>